<sequence length="310" mass="31326">MLLILLSVALLALSSAESSSEDVSQEESLFLISGKPEGRRPQGGNQPQRPPPPPGKPQGPPPQGGNQSQGPPPPPGKPEGRPPQGGNQSQGPPPHPGKPERPPPQGGNQSQGPPPHPGKPESRPPQGGHQSQGPPPTPGKPEGPPPQGGNQSQGTPPPPGKPEGRPPQGGNQSQGPPPHPGKPERPPPQGGNQSHRPPPPPGKPERPPPQGGNQSQGPPPHPGKPEGPPPQEGNKSRSARSPPGKPQGPPQQEGNKPQGPPPPGKPQGPPPAGGNPQQPQAPPAGKPQGPPPPPQGGRPPRPAQGQQPPQ</sequence>
<protein>
    <recommendedName>
        <fullName>Basic salivary proline-rich protein 4</fullName>
        <shortName>Salivary proline-rich protein Po</shortName>
    </recommendedName>
    <alternativeName>
        <fullName>Parotid o protein</fullName>
    </alternativeName>
    <alternativeName>
        <fullName>Salivary proline-rich protein II-1</fullName>
    </alternativeName>
    <component>
        <recommendedName>
            <fullName>Protein N1</fullName>
        </recommendedName>
    </component>
    <component>
        <recommendedName>
            <fullName>Glycosylated protein A</fullName>
        </recommendedName>
    </component>
    <component>
        <recommendedName>
            <fullName>Peptide P-D</fullName>
        </recommendedName>
        <alternativeName>
            <fullName>Proline-rich peptide IB-5</fullName>
        </alternativeName>
    </component>
</protein>
<accession>P10163</accession>
<accession>A1L439</accession>
<accession>O00600</accession>
<accession>P02813</accession>
<accession>P10161</accession>
<accession>P10162</accession>
<accession>P81489</accession>
<keyword id="KW-0903">Direct protein sequencing</keyword>
<keyword id="KW-0325">Glycoprotein</keyword>
<keyword id="KW-1267">Proteomics identification</keyword>
<keyword id="KW-0873">Pyrrolidone carboxylic acid</keyword>
<keyword id="KW-1185">Reference proteome</keyword>
<keyword id="KW-0677">Repeat</keyword>
<keyword id="KW-0964">Secreted</keyword>
<keyword id="KW-0732">Signal</keyword>
<organism>
    <name type="scientific">Homo sapiens</name>
    <name type="common">Human</name>
    <dbReference type="NCBI Taxonomy" id="9606"/>
    <lineage>
        <taxon>Eukaryota</taxon>
        <taxon>Metazoa</taxon>
        <taxon>Chordata</taxon>
        <taxon>Craniata</taxon>
        <taxon>Vertebrata</taxon>
        <taxon>Euteleostomi</taxon>
        <taxon>Mammalia</taxon>
        <taxon>Eutheria</taxon>
        <taxon>Euarchontoglires</taxon>
        <taxon>Primates</taxon>
        <taxon>Haplorrhini</taxon>
        <taxon>Catarrhini</taxon>
        <taxon>Hominidae</taxon>
        <taxon>Homo</taxon>
    </lineage>
</organism>
<proteinExistence type="evidence at protein level"/>
<dbReference type="EMBL" id="K03207">
    <property type="protein sequence ID" value="AAA60188.1"/>
    <property type="molecule type" value="mRNA"/>
</dbReference>
<dbReference type="EMBL" id="X07882">
    <property type="protein sequence ID" value="CAA30729.1"/>
    <property type="status" value="ALT_SEQ"/>
    <property type="molecule type" value="Genomic_DNA"/>
</dbReference>
<dbReference type="EMBL" id="X07715">
    <property type="protein sequence ID" value="CAA30543.1"/>
    <property type="status" value="ALT_SEQ"/>
    <property type="molecule type" value="Genomic_DNA"/>
</dbReference>
<dbReference type="EMBL" id="AC010176">
    <property type="status" value="NOT_ANNOTATED_CDS"/>
    <property type="molecule type" value="Genomic_DNA"/>
</dbReference>
<dbReference type="EMBL" id="BC130386">
    <property type="protein sequence ID" value="AAI30387.1"/>
    <property type="molecule type" value="mRNA"/>
</dbReference>
<dbReference type="EMBL" id="S80916">
    <property type="protein sequence ID" value="AAB50687.2"/>
    <property type="molecule type" value="Genomic_DNA"/>
</dbReference>
<dbReference type="EMBL" id="X07704">
    <property type="protein sequence ID" value="CAA30542.1"/>
    <property type="molecule type" value="Genomic_DNA"/>
</dbReference>
<dbReference type="PIR" id="S03176">
    <property type="entry name" value="PIHUSD"/>
</dbReference>
<dbReference type="BioGRID" id="111536">
    <property type="interactions" value="4"/>
</dbReference>
<dbReference type="FunCoup" id="P10163">
    <property type="interactions" value="210"/>
</dbReference>
<dbReference type="STRING" id="9606.ENSP00000279575"/>
<dbReference type="GlyCosmos" id="P10163">
    <property type="glycosylation" value="8 sites, No reported glycans"/>
</dbReference>
<dbReference type="GlyGen" id="P10163">
    <property type="glycosylation" value="9 sites"/>
</dbReference>
<dbReference type="iPTMnet" id="P10163"/>
<dbReference type="BioMuta" id="PRB4"/>
<dbReference type="DMDM" id="158517854"/>
<dbReference type="jPOST" id="P10163"/>
<dbReference type="MassIVE" id="P10163"/>
<dbReference type="PaxDb" id="9606-ENSP00000279575"/>
<dbReference type="PeptideAtlas" id="P10163"/>
<dbReference type="Pumba" id="P10163"/>
<dbReference type="TopDownProteomics" id="P10163"/>
<dbReference type="AGR" id="HGNC:9340"/>
<dbReference type="GeneCards" id="PRB4"/>
<dbReference type="HGNC" id="HGNC:9340">
    <property type="gene designation" value="PRB4"/>
</dbReference>
<dbReference type="MIM" id="180990">
    <property type="type" value="gene"/>
</dbReference>
<dbReference type="neXtProt" id="NX_P10163"/>
<dbReference type="PharmGKB" id="PA33702"/>
<dbReference type="eggNOG" id="ENOG502RU4G">
    <property type="taxonomic scope" value="Eukaryota"/>
</dbReference>
<dbReference type="InParanoid" id="P10163"/>
<dbReference type="PAN-GO" id="P10163">
    <property type="GO annotations" value="0 GO annotations based on evolutionary models"/>
</dbReference>
<dbReference type="PathwayCommons" id="P10163"/>
<dbReference type="SIGNOR" id="P10163"/>
<dbReference type="GeneWiki" id="PRB4"/>
<dbReference type="Pharos" id="P10163">
    <property type="development level" value="Tdark"/>
</dbReference>
<dbReference type="PRO" id="PR:P10163"/>
<dbReference type="Proteomes" id="UP000005640">
    <property type="component" value="Unplaced"/>
</dbReference>
<dbReference type="RNAct" id="P10163">
    <property type="molecule type" value="protein"/>
</dbReference>
<dbReference type="GO" id="GO:0005576">
    <property type="term" value="C:extracellular region"/>
    <property type="evidence" value="ECO:0000303"/>
    <property type="project" value="UniProtKB"/>
</dbReference>
<dbReference type="DisProt" id="DP00119"/>
<dbReference type="InterPro" id="IPR026086">
    <property type="entry name" value="Pro-rich"/>
</dbReference>
<dbReference type="PANTHER" id="PTHR23203:SF15">
    <property type="entry name" value="BASIC SALIVARY PROLINE-RICH PROTEIN 4"/>
    <property type="match status" value="1"/>
</dbReference>
<dbReference type="PANTHER" id="PTHR23203">
    <property type="entry name" value="PROLINE-RICH PROTEIN"/>
    <property type="match status" value="1"/>
</dbReference>
<dbReference type="Pfam" id="PF15240">
    <property type="entry name" value="Pro-rich"/>
    <property type="match status" value="2"/>
</dbReference>
<dbReference type="SMART" id="SM01412">
    <property type="entry name" value="Pro-rich"/>
    <property type="match status" value="2"/>
</dbReference>
<evidence type="ECO:0000255" key="1"/>
<evidence type="ECO:0000256" key="2">
    <source>
        <dbReference type="SAM" id="MobiDB-lite"/>
    </source>
</evidence>
<evidence type="ECO:0000269" key="3">
    <source>
    </source>
</evidence>
<evidence type="ECO:0000269" key="4">
    <source>
    </source>
</evidence>
<evidence type="ECO:0000269" key="5">
    <source>
    </source>
</evidence>
<evidence type="ECO:0000269" key="6">
    <source>
    </source>
</evidence>
<evidence type="ECO:0000269" key="7">
    <source>
    </source>
</evidence>
<evidence type="ECO:0000269" key="8">
    <source>
    </source>
</evidence>
<evidence type="ECO:0000269" key="9">
    <source>
    </source>
</evidence>
<evidence type="ECO:0000305" key="10"/>
<comment type="subcellular location">
    <subcellularLocation>
        <location>Secreted</location>
    </subcellularLocation>
</comment>
<comment type="PTM">
    <text evidence="5">N-glycosylated.</text>
</comment>
<comment type="PTM">
    <text evidence="4">Proteolytically cleaved at the tripeptide Xaa-Pro-Gln, where Xaa in the P(3) position is mostly lysine. The endoprotease may be of microbial origin. Pyroglutamate formation found on at least Gln-46, Gln-48, Gln-67, Gln-88; Gln-90; Gln-193; Gln-288 Gln-214 and Gln-295, preferentially in diabetic, and head and neck cancer patients.</text>
</comment>
<comment type="polymorphism">
    <text evidence="6">The number of repeats is polymorphic and varies among different alleles. Allele S (short), allele M (medium) and allele L (long) contain 6, 7 and 9 tandem repeats respectively.</text>
</comment>
<comment type="sequence caution" evidence="10">
    <conflict type="erroneous gene model prediction">
        <sequence resource="EMBL-CDS" id="CAA30543"/>
    </conflict>
</comment>
<comment type="sequence caution" evidence="10">
    <conflict type="erroneous gene model prediction">
        <sequence resource="EMBL-CDS" id="CAA30729"/>
    </conflict>
</comment>
<gene>
    <name type="primary">PRB4</name>
</gene>
<feature type="signal peptide" evidence="8">
    <location>
        <begin position="1"/>
        <end position="16"/>
    </location>
</feature>
<feature type="chain" id="PRO_0000022102" description="Basic salivary proline-rich protein 4">
    <location>
        <begin position="17"/>
        <end position="310"/>
    </location>
</feature>
<feature type="peptide" id="PRO_0000022103" description="Protein N1">
    <location>
        <begin position="17"/>
        <end position="39"/>
    </location>
</feature>
<feature type="chain" id="PRO_0000022104" description="Glycosylated protein A">
    <location>
        <begin position="40"/>
        <end position="177"/>
    </location>
</feature>
<feature type="chain" id="PRO_0000022099" description="Peptide P-D">
    <location>
        <begin position="241"/>
        <end position="310"/>
    </location>
</feature>
<feature type="repeat" description="1">
    <location>
        <begin position="35"/>
        <end position="55"/>
    </location>
</feature>
<feature type="repeat" description="2">
    <location>
        <begin position="56"/>
        <end position="76"/>
    </location>
</feature>
<feature type="repeat" description="3">
    <location>
        <begin position="77"/>
        <end position="97"/>
    </location>
</feature>
<feature type="repeat" description="4">
    <location>
        <begin position="98"/>
        <end position="118"/>
    </location>
</feature>
<feature type="repeat" description="5">
    <location>
        <begin position="119"/>
        <end position="139"/>
    </location>
</feature>
<feature type="repeat" description="6">
    <location>
        <begin position="140"/>
        <end position="160"/>
    </location>
</feature>
<feature type="repeat" description="7">
    <location>
        <begin position="161"/>
        <end position="181"/>
    </location>
</feature>
<feature type="repeat" description="8">
    <location>
        <begin position="182"/>
        <end position="202"/>
    </location>
</feature>
<feature type="repeat" description="9">
    <location>
        <begin position="203"/>
        <end position="223"/>
    </location>
</feature>
<feature type="repeat" description="10; truncated">
    <location>
        <begin position="224"/>
        <end position="234"/>
    </location>
</feature>
<feature type="region of interest" description="Disordered" evidence="2">
    <location>
        <begin position="14"/>
        <end position="310"/>
    </location>
</feature>
<feature type="region of interest" description="9.5 X 21 AA tandem repeats of K-P-[EQ]-[GR]-[PR]-[PR]-P-Q-G-G-N-Q-[PS]-[QH]-[RG]-[PT]-P-P-[PH]-P-G">
    <location>
        <begin position="35"/>
        <end position="234"/>
    </location>
</feature>
<feature type="compositionally biased region" description="Pro residues" evidence="2">
    <location>
        <begin position="48"/>
        <end position="63"/>
    </location>
</feature>
<feature type="compositionally biased region" description="Pro residues" evidence="2">
    <location>
        <begin position="133"/>
        <end position="147"/>
    </location>
</feature>
<feature type="compositionally biased region" description="Pro residues" evidence="2">
    <location>
        <begin position="196"/>
        <end position="210"/>
    </location>
</feature>
<feature type="compositionally biased region" description="Pro residues" evidence="2">
    <location>
        <begin position="217"/>
        <end position="231"/>
    </location>
</feature>
<feature type="compositionally biased region" description="Pro residues" evidence="2">
    <location>
        <begin position="258"/>
        <end position="310"/>
    </location>
</feature>
<feature type="glycosylation site" description="N-linked (GlcNAc...) asparagine" evidence="1">
    <location>
        <position position="66"/>
    </location>
</feature>
<feature type="glycosylation site" description="N-linked (GlcNAc...) asparagine" evidence="5">
    <location>
        <position position="87"/>
    </location>
</feature>
<feature type="glycosylation site" description="N-linked (GlcNAc...) asparagine" evidence="1">
    <location>
        <position position="108"/>
    </location>
</feature>
<feature type="glycosylation site" description="N-linked (GlcNAc...) asparagine" evidence="1">
    <location>
        <position position="150"/>
    </location>
</feature>
<feature type="glycosylation site" description="N-linked (GlcNAc...) asparagine" evidence="1">
    <location>
        <position position="171"/>
    </location>
</feature>
<feature type="glycosylation site" description="N-linked (GlcNAc...) asparagine" evidence="1">
    <location>
        <position position="192"/>
    </location>
</feature>
<feature type="glycosylation site" description="N-linked (GlcNAc...) asparagine" evidence="1">
    <location>
        <position position="213"/>
    </location>
</feature>
<feature type="glycosylation site" description="N-linked (GlcNAc...) asparagine" evidence="1">
    <location>
        <position position="234"/>
    </location>
</feature>
<feature type="sequence variant" id="VAR_035034" description="In allele M and allele S.">
    <location>
        <begin position="113"/>
        <end position="154"/>
    </location>
</feature>
<feature type="sequence variant" id="VAR_035035" description="In allele S.">
    <location>
        <begin position="164"/>
        <end position="184"/>
    </location>
</feature>
<feature type="sequence variant" id="VAR_031548" description="In dbSNP:rs11054244.">
    <original>R</original>
    <variation>G</variation>
    <location>
        <position position="185"/>
    </location>
</feature>
<feature type="sequence variant" id="VAR_031549" description="In dbSNP:rs11054243.">
    <original>P</original>
    <variation>R</variation>
    <location>
        <position position="186"/>
    </location>
</feature>
<feature type="sequence variant" id="VAR_031550" description="In dbSNP:rs12308244.">
    <original>P</original>
    <variation>H</variation>
    <location>
        <position position="200"/>
    </location>
</feature>
<feature type="sequence variant" id="VAR_031551" description="In dbSNP:rs1052808." evidence="3 7 9">
    <original>A</original>
    <variation>P</variation>
    <location>
        <position position="272"/>
    </location>
</feature>
<feature type="sequence conflict" description="In Ref. 5; AA sequence." evidence="10" ref="5">
    <original>S</original>
    <variation>P</variation>
    <location>
        <position position="28"/>
    </location>
</feature>
<feature type="sequence conflict" description="In Ref. 5; AA sequence." evidence="10" ref="5">
    <original>LISGKPEGR</original>
    <variation>IIPPKPPG</variation>
    <location>
        <begin position="31"/>
        <end position="39"/>
    </location>
</feature>
<feature type="sequence conflict" description="In Ref. 6; AAB50687." evidence="10" ref="6">
    <original>LIS</original>
    <variation>PPP</variation>
    <location>
        <begin position="31"/>
        <end position="33"/>
    </location>
</feature>
<feature type="sequence conflict" description="In Ref. 2; CAA30543 and 7; CAA30542." evidence="10" ref="2 7">
    <original>E</original>
    <variation>Q</variation>
    <location>
        <position position="37"/>
    </location>
</feature>
<feature type="sequence conflict" description="In Ref. 5; AA sequence." evidence="10" ref="5">
    <original>N</original>
    <variation>D</variation>
    <location>
        <position position="66"/>
    </location>
</feature>
<feature type="sequence conflict" description="In Ref. 7; CAA30542." evidence="10" ref="7">
    <location>
        <begin position="74"/>
        <end position="94"/>
    </location>
</feature>
<feature type="sequence conflict" description="In Ref. 5; AA sequence." evidence="10" ref="5">
    <original>P</original>
    <variation>PP</variation>
    <location>
        <position position="96"/>
    </location>
</feature>
<feature type="sequence conflict" description="In Ref. 5; AA sequence." evidence="10" ref="5">
    <original>R</original>
    <variation>E</variation>
    <location>
        <position position="101"/>
    </location>
</feature>
<feature type="sequence conflict" description="In Ref. 7; CAA30542." evidence="10" ref="7">
    <original>SR</original>
    <variation>RP</variation>
    <location>
        <begin position="122"/>
        <end position="123"/>
    </location>
</feature>
<feature type="sequence conflict" description="In Ref. 7; CAA30542." evidence="10" ref="7">
    <original>H</original>
    <variation>N</variation>
    <location>
        <position position="129"/>
    </location>
</feature>
<feature type="sequence conflict" description="In Ref. 7; CAA30542." evidence="10" ref="7">
    <location>
        <begin position="154"/>
        <end position="174"/>
    </location>
</feature>
<feature type="sequence conflict" description="In Ref. 5; AA sequence." evidence="10" ref="5">
    <original>GGN</original>
    <variation>QGG</variation>
    <location>
        <begin position="169"/>
        <end position="171"/>
    </location>
</feature>
<feature type="sequence conflict" description="In Ref. 5; AA sequence." evidence="10" ref="5">
    <original>N</original>
    <variation>D</variation>
    <location>
        <position position="192"/>
    </location>
</feature>
<feature type="sequence conflict" description="In Ref. 5; AA sequence." evidence="10" ref="5">
    <original>N</original>
    <variation>D</variation>
    <location>
        <position position="213"/>
    </location>
</feature>
<name>PRB4_HUMAN</name>
<reference key="1">
    <citation type="journal article" date="1985" name="J. Biol. Chem.">
        <title>Differential RNA splicing and post-translational cleavages in the human salivary proline-rich protein gene system.</title>
        <authorList>
            <person name="Maeda N."/>
            <person name="Kim H.-S."/>
            <person name="Azen E.A."/>
            <person name="Smithies O."/>
        </authorList>
    </citation>
    <scope>NUCLEOTIDE SEQUENCE [MRNA] (ALLELE S)</scope>
    <scope>POLYMORPHISM</scope>
</reference>
<reference key="2">
    <citation type="journal article" date="1988" name="Genetics">
        <title>Length polymorphisms in human proline-rich protein genes generated by intragenic unequal crossing over.</title>
        <authorList>
            <person name="Lyons K.M."/>
            <person name="Stein J.H."/>
            <person name="Smithies O."/>
        </authorList>
    </citation>
    <scope>NUCLEOTIDE SEQUENCE [GENOMIC DNA] (ALLELES L AND S)</scope>
    <scope>POLYMORPHISM</scope>
</reference>
<reference key="3">
    <citation type="journal article" date="2006" name="Nature">
        <title>The finished DNA sequence of human chromosome 12.</title>
        <authorList>
            <person name="Scherer S.E."/>
            <person name="Muzny D.M."/>
            <person name="Buhay C.J."/>
            <person name="Chen R."/>
            <person name="Cree A."/>
            <person name="Ding Y."/>
            <person name="Dugan-Rocha S."/>
            <person name="Gill R."/>
            <person name="Gunaratne P."/>
            <person name="Harris R.A."/>
            <person name="Hawes A.C."/>
            <person name="Hernandez J."/>
            <person name="Hodgson A.V."/>
            <person name="Hume J."/>
            <person name="Jackson A."/>
            <person name="Khan Z.M."/>
            <person name="Kovar-Smith C."/>
            <person name="Lewis L.R."/>
            <person name="Lozado R.J."/>
            <person name="Metzker M.L."/>
            <person name="Milosavljevic A."/>
            <person name="Miner G.R."/>
            <person name="Montgomery K.T."/>
            <person name="Morgan M.B."/>
            <person name="Nazareth L.V."/>
            <person name="Scott G."/>
            <person name="Sodergren E."/>
            <person name="Song X.-Z."/>
            <person name="Steffen D."/>
            <person name="Lovering R.C."/>
            <person name="Wheeler D.A."/>
            <person name="Worley K.C."/>
            <person name="Yuan Y."/>
            <person name="Zhang Z."/>
            <person name="Adams C.Q."/>
            <person name="Ansari-Lari M.A."/>
            <person name="Ayele M."/>
            <person name="Brown M.J."/>
            <person name="Chen G."/>
            <person name="Chen Z."/>
            <person name="Clerc-Blankenburg K.P."/>
            <person name="Davis C."/>
            <person name="Delgado O."/>
            <person name="Dinh H.H."/>
            <person name="Draper H."/>
            <person name="Gonzalez-Garay M.L."/>
            <person name="Havlak P."/>
            <person name="Jackson L.R."/>
            <person name="Jacob L.S."/>
            <person name="Kelly S.H."/>
            <person name="Li L."/>
            <person name="Li Z."/>
            <person name="Liu J."/>
            <person name="Liu W."/>
            <person name="Lu J."/>
            <person name="Maheshwari M."/>
            <person name="Nguyen B.-V."/>
            <person name="Okwuonu G.O."/>
            <person name="Pasternak S."/>
            <person name="Perez L.M."/>
            <person name="Plopper F.J.H."/>
            <person name="Santibanez J."/>
            <person name="Shen H."/>
            <person name="Tabor P.E."/>
            <person name="Verduzco D."/>
            <person name="Waldron L."/>
            <person name="Wang Q."/>
            <person name="Williams G.A."/>
            <person name="Zhang J."/>
            <person name="Zhou J."/>
            <person name="Allen C.C."/>
            <person name="Amin A.G."/>
            <person name="Anyalebechi V."/>
            <person name="Bailey M."/>
            <person name="Barbaria J.A."/>
            <person name="Bimage K.E."/>
            <person name="Bryant N.P."/>
            <person name="Burch P.E."/>
            <person name="Burkett C.E."/>
            <person name="Burrell K.L."/>
            <person name="Calderon E."/>
            <person name="Cardenas V."/>
            <person name="Carter K."/>
            <person name="Casias K."/>
            <person name="Cavazos I."/>
            <person name="Cavazos S.R."/>
            <person name="Ceasar H."/>
            <person name="Chacko J."/>
            <person name="Chan S.N."/>
            <person name="Chavez D."/>
            <person name="Christopoulos C."/>
            <person name="Chu J."/>
            <person name="Cockrell R."/>
            <person name="Cox C.D."/>
            <person name="Dang M."/>
            <person name="Dathorne S.R."/>
            <person name="David R."/>
            <person name="Davis C.M."/>
            <person name="Davy-Carroll L."/>
            <person name="Deshazo D.R."/>
            <person name="Donlin J.E."/>
            <person name="D'Souza L."/>
            <person name="Eaves K.A."/>
            <person name="Egan A."/>
            <person name="Emery-Cohen A.J."/>
            <person name="Escotto M."/>
            <person name="Flagg N."/>
            <person name="Forbes L.D."/>
            <person name="Gabisi A.M."/>
            <person name="Garza M."/>
            <person name="Hamilton C."/>
            <person name="Henderson N."/>
            <person name="Hernandez O."/>
            <person name="Hines S."/>
            <person name="Hogues M.E."/>
            <person name="Huang M."/>
            <person name="Idlebird D.G."/>
            <person name="Johnson R."/>
            <person name="Jolivet A."/>
            <person name="Jones S."/>
            <person name="Kagan R."/>
            <person name="King L.M."/>
            <person name="Leal B."/>
            <person name="Lebow H."/>
            <person name="Lee S."/>
            <person name="LeVan J.M."/>
            <person name="Lewis L.C."/>
            <person name="London P."/>
            <person name="Lorensuhewa L.M."/>
            <person name="Loulseged H."/>
            <person name="Lovett D.A."/>
            <person name="Lucier A."/>
            <person name="Lucier R.L."/>
            <person name="Ma J."/>
            <person name="Madu R.C."/>
            <person name="Mapua P."/>
            <person name="Martindale A.D."/>
            <person name="Martinez E."/>
            <person name="Massey E."/>
            <person name="Mawhiney S."/>
            <person name="Meador M.G."/>
            <person name="Mendez S."/>
            <person name="Mercado C."/>
            <person name="Mercado I.C."/>
            <person name="Merritt C.E."/>
            <person name="Miner Z.L."/>
            <person name="Minja E."/>
            <person name="Mitchell T."/>
            <person name="Mohabbat F."/>
            <person name="Mohabbat K."/>
            <person name="Montgomery B."/>
            <person name="Moore N."/>
            <person name="Morris S."/>
            <person name="Munidasa M."/>
            <person name="Ngo R.N."/>
            <person name="Nguyen N.B."/>
            <person name="Nickerson E."/>
            <person name="Nwaokelemeh O.O."/>
            <person name="Nwokenkwo S."/>
            <person name="Obregon M."/>
            <person name="Oguh M."/>
            <person name="Oragunye N."/>
            <person name="Oviedo R.J."/>
            <person name="Parish B.J."/>
            <person name="Parker D.N."/>
            <person name="Parrish J."/>
            <person name="Parks K.L."/>
            <person name="Paul H.A."/>
            <person name="Payton B.A."/>
            <person name="Perez A."/>
            <person name="Perrin W."/>
            <person name="Pickens A."/>
            <person name="Primus E.L."/>
            <person name="Pu L.-L."/>
            <person name="Puazo M."/>
            <person name="Quiles M.M."/>
            <person name="Quiroz J.B."/>
            <person name="Rabata D."/>
            <person name="Reeves K."/>
            <person name="Ruiz S.J."/>
            <person name="Shao H."/>
            <person name="Sisson I."/>
            <person name="Sonaike T."/>
            <person name="Sorelle R.P."/>
            <person name="Sutton A.E."/>
            <person name="Svatek A.F."/>
            <person name="Svetz L.A."/>
            <person name="Tamerisa K.S."/>
            <person name="Taylor T.R."/>
            <person name="Teague B."/>
            <person name="Thomas N."/>
            <person name="Thorn R.D."/>
            <person name="Trejos Z.Y."/>
            <person name="Trevino B.K."/>
            <person name="Ukegbu O.N."/>
            <person name="Urban J.B."/>
            <person name="Vasquez L.I."/>
            <person name="Vera V.A."/>
            <person name="Villasana D.M."/>
            <person name="Wang L."/>
            <person name="Ward-Moore S."/>
            <person name="Warren J.T."/>
            <person name="Wei X."/>
            <person name="White F."/>
            <person name="Williamson A.L."/>
            <person name="Wleczyk R."/>
            <person name="Wooden H.S."/>
            <person name="Wooden S.H."/>
            <person name="Yen J."/>
            <person name="Yoon L."/>
            <person name="Yoon V."/>
            <person name="Zorrilla S.E."/>
            <person name="Nelson D."/>
            <person name="Kucherlapati R."/>
            <person name="Weinstock G."/>
            <person name="Gibbs R.A."/>
        </authorList>
    </citation>
    <scope>NUCLEOTIDE SEQUENCE [LARGE SCALE GENOMIC DNA]</scope>
</reference>
<reference key="4">
    <citation type="journal article" date="2004" name="Genome Res.">
        <title>The status, quality, and expansion of the NIH full-length cDNA project: the Mammalian Gene Collection (MGC).</title>
        <authorList>
            <consortium name="The MGC Project Team"/>
        </authorList>
    </citation>
    <scope>NUCLEOTIDE SEQUENCE [LARGE SCALE MRNA] (ALLELE M)</scope>
    <scope>VARIANT PRO-272</scope>
    <source>
        <tissue>Cerebellum</tissue>
    </source>
</reference>
<reference key="5">
    <citation type="journal article" date="1993" name="Crit. Rev. Oral Biol. Med.">
        <title>Alignment of amino acid and DNA sequences of human proline-rich proteins.</title>
        <authorList>
            <person name="Kauffman D.L."/>
            <person name="Keller P.J."/>
            <person name="Bennick A."/>
            <person name="Blum M."/>
        </authorList>
    </citation>
    <scope>PROTEIN SEQUENCE OF 17-112 AND 155-240</scope>
    <source>
        <tissue>Saliva</tissue>
    </source>
</reference>
<reference key="6">
    <citation type="journal article" date="1996" name="Am. J. Hum. Genet.">
        <title>PRB1, PRB2, and PRB4 coded polymorphisms among human salivary concanavalin-A binding, II-1, and Po proline-rich proteins.</title>
        <authorList>
            <person name="Azen E.A."/>
            <person name="Amberger E."/>
            <person name="Fisher S."/>
            <person name="Prakobphol A."/>
            <person name="Niece R.L."/>
        </authorList>
    </citation>
    <scope>NUCLEOTIDE SEQUENCE [GENOMIC DNA] OF 31-310 (ALLELE M)</scope>
    <scope>VARIANT PRO-272</scope>
</reference>
<reference key="7">
    <citation type="journal article" date="1988" name="Genetics">
        <title>Many protein products from a few loci: assignment of human salivary proline-rich proteins to specific loci.</title>
        <authorList>
            <person name="Lyons K.M."/>
            <person name="Stein J.H."/>
            <person name="Smithies O."/>
        </authorList>
    </citation>
    <scope>NUCLEOTIDE SEQUENCE [GENOMIC DNA] OF 35-310</scope>
    <scope>VARIANT PRO-272</scope>
</reference>
<reference key="8">
    <citation type="journal article" date="1983" name="J. Biochem.">
        <title>Complete amino acid sequence of a basic proline-rich peptide, P-D, from human parotid saliva.</title>
        <authorList>
            <person name="Saitoh E."/>
            <person name="Isemura S."/>
            <person name="Sanada K."/>
        </authorList>
    </citation>
    <scope>PROTEIN SEQUENCE OF 241-310</scope>
    <source>
        <tissue>Saliva</tissue>
    </source>
</reference>
<reference key="9">
    <citation type="journal article" date="1991" name="Biochemistry">
        <title>Basic proline-rich proteins from human parotid saliva: relationships of the covalent structures of ten proteins from a single individual.</title>
        <authorList>
            <person name="Kauffman D.L."/>
            <person name="Bennick A."/>
            <person name="Blum M."/>
            <person name="Keller P.J."/>
        </authorList>
    </citation>
    <scope>PROTEIN SEQUENCE OF 241-310</scope>
    <source>
        <tissue>Saliva</tissue>
    </source>
</reference>
<reference key="10">
    <citation type="journal article" date="2008" name="J. Biol. Chem.">
        <title>Identification of Lys-Pro-Gln as a novel cleavage site specificity of saliva-associated proteases.</title>
        <authorList>
            <person name="Helmerhorst E.J."/>
            <person name="Sun X."/>
            <person name="Salih E."/>
            <person name="Oppenheim F.G."/>
        </authorList>
    </citation>
    <scope>PROTEOLYTIC PROCESSING</scope>
    <scope>IDENTIFICATION BY MASS SPECTROMETRY</scope>
</reference>
<reference key="11">
    <citation type="journal article" date="2010" name="Proteomics">
        <title>Finding new posttranslational modifications in salivary proline-rich proteins.</title>
        <authorList>
            <person name="Vitorino R."/>
            <person name="Alves R."/>
            <person name="Barros A."/>
            <person name="Caseiro A."/>
            <person name="Ferreira R."/>
            <person name="Lobo M.C."/>
            <person name="Bastos A."/>
            <person name="Duarte J."/>
            <person name="Carvalho D."/>
            <person name="Santos L.L."/>
            <person name="Amado F.L."/>
        </authorList>
    </citation>
    <scope>GLYCOSYLATION AT ASN-87</scope>
    <scope>PYROGLUTAMATE FORMATION</scope>
    <scope>VARIANTS ALLELE L AND M</scope>
    <scope>IDENTIFICATION BY MASS SPECTROMETRY</scope>
</reference>